<gene>
    <name evidence="1" type="primary">hspa8</name>
    <name evidence="4" type="synonym">hsc70</name>
</gene>
<name>HSP7C_DANRE</name>
<accession>Q90473</accession>
<feature type="chain" id="PRO_0000078276" description="Heat shock cognate 71 kDa protein">
    <location>
        <begin position="1"/>
        <end position="649"/>
    </location>
</feature>
<feature type="region of interest" description="Nucleotide-binding domain (NBD)" evidence="1">
    <location>
        <begin position="2"/>
        <end position="386"/>
    </location>
</feature>
<feature type="region of interest" description="Substrate-binding domain (SBD)" evidence="1">
    <location>
        <begin position="394"/>
        <end position="509"/>
    </location>
</feature>
<feature type="region of interest" description="Disordered" evidence="3">
    <location>
        <begin position="614"/>
        <end position="649"/>
    </location>
</feature>
<feature type="compositionally biased region" description="Gly residues" evidence="3">
    <location>
        <begin position="616"/>
        <end position="641"/>
    </location>
</feature>
<feature type="binding site" evidence="2">
    <location>
        <position position="14"/>
    </location>
    <ligand>
        <name>ADP</name>
        <dbReference type="ChEBI" id="CHEBI:456216"/>
    </ligand>
</feature>
<feature type="binding site" evidence="2">
    <location>
        <position position="15"/>
    </location>
    <ligand>
        <name>ADP</name>
        <dbReference type="ChEBI" id="CHEBI:456216"/>
    </ligand>
</feature>
<feature type="binding site" evidence="2">
    <location>
        <position position="202"/>
    </location>
    <ligand>
        <name>ADP</name>
        <dbReference type="ChEBI" id="CHEBI:456216"/>
    </ligand>
</feature>
<feature type="binding site" evidence="2">
    <location>
        <position position="268"/>
    </location>
    <ligand>
        <name>ADP</name>
        <dbReference type="ChEBI" id="CHEBI:456216"/>
    </ligand>
</feature>
<feature type="binding site" evidence="2">
    <location>
        <position position="271"/>
    </location>
    <ligand>
        <name>ADP</name>
        <dbReference type="ChEBI" id="CHEBI:456216"/>
    </ligand>
</feature>
<feature type="binding site" evidence="2">
    <location>
        <position position="275"/>
    </location>
    <ligand>
        <name>ADP</name>
        <dbReference type="ChEBI" id="CHEBI:456216"/>
    </ligand>
</feature>
<feature type="binding site" evidence="2">
    <location>
        <position position="339"/>
    </location>
    <ligand>
        <name>ADP</name>
        <dbReference type="ChEBI" id="CHEBI:456216"/>
    </ligand>
</feature>
<protein>
    <recommendedName>
        <fullName evidence="1">Heat shock cognate 71 kDa protein</fullName>
    </recommendedName>
    <alternativeName>
        <fullName>Heat shock 70 kDa protein 8</fullName>
    </alternativeName>
</protein>
<dbReference type="EMBL" id="L77146">
    <property type="protein sequence ID" value="AAB03704.1"/>
    <property type="molecule type" value="mRNA"/>
</dbReference>
<dbReference type="SMR" id="Q90473"/>
<dbReference type="FunCoup" id="Q90473">
    <property type="interactions" value="2475"/>
</dbReference>
<dbReference type="STRING" id="7955.ENSDARP00000090766"/>
<dbReference type="PaxDb" id="7955-ENSDARP00000090766"/>
<dbReference type="AGR" id="ZFIN:ZDB-GENE-990415-92"/>
<dbReference type="ZFIN" id="ZDB-GENE-990415-92">
    <property type="gene designation" value="hspa8"/>
</dbReference>
<dbReference type="eggNOG" id="KOG0101">
    <property type="taxonomic scope" value="Eukaryota"/>
</dbReference>
<dbReference type="InParanoid" id="Q90473"/>
<dbReference type="PhylomeDB" id="Q90473"/>
<dbReference type="Reactome" id="R-DRE-3371453">
    <property type="pathway name" value="Regulation of HSF1-mediated heat shock response"/>
</dbReference>
<dbReference type="Reactome" id="R-DRE-3371497">
    <property type="pathway name" value="HSP90 chaperone cycle for steroid hormone receptors (SHR) in the presence of ligand"/>
</dbReference>
<dbReference type="Reactome" id="R-DRE-450408">
    <property type="pathway name" value="AUF1 (hnRNP D0) binds and destabilizes mRNA"/>
</dbReference>
<dbReference type="Reactome" id="R-DRE-6798695">
    <property type="pathway name" value="Neutrophil degranulation"/>
</dbReference>
<dbReference type="Reactome" id="R-DRE-72163">
    <property type="pathway name" value="mRNA Splicing - Major Pathway"/>
</dbReference>
<dbReference type="Reactome" id="R-DRE-8876725">
    <property type="pathway name" value="Protein methylation"/>
</dbReference>
<dbReference type="PRO" id="PR:Q90473"/>
<dbReference type="Proteomes" id="UP000000437">
    <property type="component" value="Unplaced"/>
</dbReference>
<dbReference type="GO" id="GO:0005737">
    <property type="term" value="C:cytoplasm"/>
    <property type="evidence" value="ECO:0000318"/>
    <property type="project" value="GO_Central"/>
</dbReference>
<dbReference type="GO" id="GO:0005829">
    <property type="term" value="C:cytosol"/>
    <property type="evidence" value="ECO:0000318"/>
    <property type="project" value="GO_Central"/>
</dbReference>
<dbReference type="GO" id="GO:0005765">
    <property type="term" value="C:lysosomal membrane"/>
    <property type="evidence" value="ECO:0000250"/>
    <property type="project" value="UniProtKB"/>
</dbReference>
<dbReference type="GO" id="GO:0005730">
    <property type="term" value="C:nucleolus"/>
    <property type="evidence" value="ECO:0007669"/>
    <property type="project" value="UniProtKB-SubCell"/>
</dbReference>
<dbReference type="GO" id="GO:0005634">
    <property type="term" value="C:nucleus"/>
    <property type="evidence" value="ECO:0000318"/>
    <property type="project" value="GO_Central"/>
</dbReference>
<dbReference type="GO" id="GO:0005886">
    <property type="term" value="C:plasma membrane"/>
    <property type="evidence" value="ECO:0000318"/>
    <property type="project" value="GO_Central"/>
</dbReference>
<dbReference type="GO" id="GO:0005524">
    <property type="term" value="F:ATP binding"/>
    <property type="evidence" value="ECO:0007669"/>
    <property type="project" value="UniProtKB-KW"/>
</dbReference>
<dbReference type="GO" id="GO:0016887">
    <property type="term" value="F:ATP hydrolysis activity"/>
    <property type="evidence" value="ECO:0000318"/>
    <property type="project" value="GO_Central"/>
</dbReference>
<dbReference type="GO" id="GO:0140662">
    <property type="term" value="F:ATP-dependent protein folding chaperone"/>
    <property type="evidence" value="ECO:0007669"/>
    <property type="project" value="InterPro"/>
</dbReference>
<dbReference type="GO" id="GO:0031072">
    <property type="term" value="F:heat shock protein binding"/>
    <property type="evidence" value="ECO:0000318"/>
    <property type="project" value="GO_Central"/>
</dbReference>
<dbReference type="GO" id="GO:0044183">
    <property type="term" value="F:protein folding chaperone"/>
    <property type="evidence" value="ECO:0000318"/>
    <property type="project" value="GO_Central"/>
</dbReference>
<dbReference type="GO" id="GO:0030674">
    <property type="term" value="F:protein-macromolecule adaptor activity"/>
    <property type="evidence" value="ECO:0000250"/>
    <property type="project" value="UniProtKB"/>
</dbReference>
<dbReference type="GO" id="GO:0051085">
    <property type="term" value="P:chaperone cofactor-dependent protein refolding"/>
    <property type="evidence" value="ECO:0000318"/>
    <property type="project" value="GO_Central"/>
</dbReference>
<dbReference type="GO" id="GO:0072318">
    <property type="term" value="P:clathrin coat disassembly"/>
    <property type="evidence" value="ECO:0000314"/>
    <property type="project" value="UniProtKB"/>
</dbReference>
<dbReference type="GO" id="GO:0031076">
    <property type="term" value="P:embryonic camera-type eye development"/>
    <property type="evidence" value="ECO:0000315"/>
    <property type="project" value="ZFIN"/>
</dbReference>
<dbReference type="GO" id="GO:0031101">
    <property type="term" value="P:fin regeneration"/>
    <property type="evidence" value="ECO:0000270"/>
    <property type="project" value="ZFIN"/>
</dbReference>
<dbReference type="GO" id="GO:0048260">
    <property type="term" value="P:positive regulation of receptor-mediated endocytosis"/>
    <property type="evidence" value="ECO:0000315"/>
    <property type="project" value="ZFIN"/>
</dbReference>
<dbReference type="GO" id="GO:1902946">
    <property type="term" value="P:protein localization to early endosome"/>
    <property type="evidence" value="ECO:0000315"/>
    <property type="project" value="ZFIN"/>
</dbReference>
<dbReference type="GO" id="GO:0042026">
    <property type="term" value="P:protein refolding"/>
    <property type="evidence" value="ECO:0000318"/>
    <property type="project" value="GO_Central"/>
</dbReference>
<dbReference type="GO" id="GO:0061740">
    <property type="term" value="P:protein targeting to lysosome involved in chaperone-mediated autophagy"/>
    <property type="evidence" value="ECO:0000250"/>
    <property type="project" value="UniProtKB"/>
</dbReference>
<dbReference type="GO" id="GO:0040036">
    <property type="term" value="P:regulation of fibroblast growth factor receptor signaling pathway"/>
    <property type="evidence" value="ECO:0000315"/>
    <property type="project" value="ZFIN"/>
</dbReference>
<dbReference type="CDD" id="cd10233">
    <property type="entry name" value="ASKHA_NBD_HSP70_HSPA1"/>
    <property type="match status" value="1"/>
</dbReference>
<dbReference type="FunFam" id="2.60.34.10:FF:000002">
    <property type="entry name" value="Heat shock 70 kDa"/>
    <property type="match status" value="1"/>
</dbReference>
<dbReference type="FunFam" id="3.30.420.40:FF:000172">
    <property type="entry name" value="Heat shock 70 kDa protein"/>
    <property type="match status" value="1"/>
</dbReference>
<dbReference type="FunFam" id="3.30.30.30:FF:000001">
    <property type="entry name" value="heat shock 70 kDa protein-like"/>
    <property type="match status" value="1"/>
</dbReference>
<dbReference type="FunFam" id="3.30.420.40:FF:000028">
    <property type="entry name" value="heat shock 70 kDa protein-like"/>
    <property type="match status" value="1"/>
</dbReference>
<dbReference type="FunFam" id="3.30.420.40:FF:000135">
    <property type="entry name" value="Heat shock cognate 71 kDa protein"/>
    <property type="match status" value="1"/>
</dbReference>
<dbReference type="FunFam" id="3.90.640.10:FF:000134">
    <property type="entry name" value="Heat shock cognate 71 kDa protein"/>
    <property type="match status" value="1"/>
</dbReference>
<dbReference type="FunFam" id="1.20.1270.10:FF:000003">
    <property type="entry name" value="heat shock cognate 71 kDa protein-like"/>
    <property type="match status" value="1"/>
</dbReference>
<dbReference type="FunFam" id="3.30.420.40:FF:000026">
    <property type="entry name" value="Heat shock protein 70"/>
    <property type="match status" value="1"/>
</dbReference>
<dbReference type="Gene3D" id="1.20.1270.10">
    <property type="match status" value="1"/>
</dbReference>
<dbReference type="Gene3D" id="3.30.30.30">
    <property type="match status" value="1"/>
</dbReference>
<dbReference type="Gene3D" id="3.30.420.40">
    <property type="match status" value="2"/>
</dbReference>
<dbReference type="Gene3D" id="3.90.640.10">
    <property type="entry name" value="Actin, Chain A, domain 4"/>
    <property type="match status" value="1"/>
</dbReference>
<dbReference type="Gene3D" id="2.60.34.10">
    <property type="entry name" value="Substrate Binding Domain Of DNAk, Chain A, domain 1"/>
    <property type="match status" value="1"/>
</dbReference>
<dbReference type="InterPro" id="IPR043129">
    <property type="entry name" value="ATPase_NBD"/>
</dbReference>
<dbReference type="InterPro" id="IPR018181">
    <property type="entry name" value="Heat_shock_70_CS"/>
</dbReference>
<dbReference type="InterPro" id="IPR029048">
    <property type="entry name" value="HSP70_C_sf"/>
</dbReference>
<dbReference type="InterPro" id="IPR029047">
    <property type="entry name" value="HSP70_peptide-bd_sf"/>
</dbReference>
<dbReference type="InterPro" id="IPR013126">
    <property type="entry name" value="Hsp_70_fam"/>
</dbReference>
<dbReference type="NCBIfam" id="NF001413">
    <property type="entry name" value="PRK00290.1"/>
    <property type="match status" value="1"/>
</dbReference>
<dbReference type="PANTHER" id="PTHR19375">
    <property type="entry name" value="HEAT SHOCK PROTEIN 70KDA"/>
    <property type="match status" value="1"/>
</dbReference>
<dbReference type="Pfam" id="PF00012">
    <property type="entry name" value="HSP70"/>
    <property type="match status" value="1"/>
</dbReference>
<dbReference type="PRINTS" id="PR00301">
    <property type="entry name" value="HEATSHOCK70"/>
</dbReference>
<dbReference type="SUPFAM" id="SSF53067">
    <property type="entry name" value="Actin-like ATPase domain"/>
    <property type="match status" value="2"/>
</dbReference>
<dbReference type="SUPFAM" id="SSF100934">
    <property type="entry name" value="Heat shock protein 70kD (HSP70), C-terminal subdomain"/>
    <property type="match status" value="1"/>
</dbReference>
<dbReference type="SUPFAM" id="SSF100920">
    <property type="entry name" value="Heat shock protein 70kD (HSP70), peptide-binding domain"/>
    <property type="match status" value="1"/>
</dbReference>
<dbReference type="PROSITE" id="PS00297">
    <property type="entry name" value="HSP70_1"/>
    <property type="match status" value="1"/>
</dbReference>
<dbReference type="PROSITE" id="PS00329">
    <property type="entry name" value="HSP70_2"/>
    <property type="match status" value="1"/>
</dbReference>
<dbReference type="PROSITE" id="PS01036">
    <property type="entry name" value="HSP70_3"/>
    <property type="match status" value="1"/>
</dbReference>
<keyword id="KW-0067">ATP-binding</keyword>
<keyword id="KW-0072">Autophagy</keyword>
<keyword id="KW-1003">Cell membrane</keyword>
<keyword id="KW-0963">Cytoplasm</keyword>
<keyword id="KW-0458">Lysosome</keyword>
<keyword id="KW-0472">Membrane</keyword>
<keyword id="KW-0547">Nucleotide-binding</keyword>
<keyword id="KW-0539">Nucleus</keyword>
<keyword id="KW-1185">Reference proteome</keyword>
<keyword id="KW-0346">Stress response</keyword>
<evidence type="ECO:0000250" key="1">
    <source>
        <dbReference type="UniProtKB" id="P11142"/>
    </source>
</evidence>
<evidence type="ECO:0000250" key="2">
    <source>
        <dbReference type="UniProtKB" id="P19120"/>
    </source>
</evidence>
<evidence type="ECO:0000256" key="3">
    <source>
        <dbReference type="SAM" id="MobiDB-lite"/>
    </source>
</evidence>
<evidence type="ECO:0000303" key="4">
    <source>
    </source>
</evidence>
<evidence type="ECO:0000305" key="5"/>
<proteinExistence type="evidence at transcript level"/>
<organism>
    <name type="scientific">Danio rerio</name>
    <name type="common">Zebrafish</name>
    <name type="synonym">Brachydanio rerio</name>
    <dbReference type="NCBI Taxonomy" id="7955"/>
    <lineage>
        <taxon>Eukaryota</taxon>
        <taxon>Metazoa</taxon>
        <taxon>Chordata</taxon>
        <taxon>Craniata</taxon>
        <taxon>Vertebrata</taxon>
        <taxon>Euteleostomi</taxon>
        <taxon>Actinopterygii</taxon>
        <taxon>Neopterygii</taxon>
        <taxon>Teleostei</taxon>
        <taxon>Ostariophysi</taxon>
        <taxon>Cypriniformes</taxon>
        <taxon>Danionidae</taxon>
        <taxon>Danioninae</taxon>
        <taxon>Danio</taxon>
    </lineage>
</organism>
<comment type="function">
    <text evidence="1 2">Molecular chaperone implicated in a wide variety of cellular processes, including protection of the proteome from stress, folding and transport of newly synthesized polypeptides, chaperone-mediated autophagy, activation of proteolysis of misfolded proteins and the formation and dissociation of protein complexes. Plays a pivotal role in the protein quality control system, ensuring the correct folding of proteins, the re-folding of misfolded proteins and controlling the targeting of proteins for subsequent degradation. This is achieved through cycles of ATP binding, ATP hydrolysis and ADP release, mediated by co-chaperones. The affinity of HSP70 for polypeptides is regulated by its nucleotide bound state. In the ATP-bound form, it has a low affinity for substrate proteins. However, upon hydrolysis of the ATP to ADP, it undergoes a conformational change that increases its affinity for substrate proteins. HSP70 goes through repeated cycles of ATP hydrolysis and nucleotide exchange, which permits cycles of substrate binding and release. Substrate recognition component in chaperone-mediated autophagy (CMA), a selective protein degradation process that mediates degradation of proteins with a -KFERQ motif: HSPA8/HSC70 specifically recognizes and binds cytosolic proteins bearing a -KFERQ motif and promotes their recruitment to the surface of the lysosome where they bind to lysosomal protein LAMP2. KFERQ motif-containing proteins are eventually transported into the lysosomal lumen where they are degraded (By similarity). May play a role in uncoating of clathrin-coated vesicles (By similarity).</text>
</comment>
<comment type="subcellular location">
    <subcellularLocation>
        <location evidence="1">Cytoplasm</location>
    </subcellularLocation>
    <subcellularLocation>
        <location evidence="1">Nucleus</location>
        <location evidence="1">Nucleolus</location>
    </subcellularLocation>
    <subcellularLocation>
        <location evidence="1">Cell membrane</location>
    </subcellularLocation>
    <subcellularLocation>
        <location evidence="1">Lysosome membrane</location>
        <topology evidence="1">Peripheral membrane protein</topology>
        <orientation evidence="1">Cytoplasmic side</orientation>
    </subcellularLocation>
    <text evidence="1">Localized in cytoplasmic mRNP granules containing untranslated mRNAs. Translocates rapidly from the cytoplasm to the nuclei, and especially to the nucleoli, upon heat shock.</text>
</comment>
<comment type="domain">
    <text evidence="1">The N-terminal nucleotide binding domain (NBD) (also known as the ATPase domain) is responsible for binding and hydrolyzing ATP. The C-terminal substrate-binding domain (SBD) (also known as peptide-binding domain) binds to the client/substrate proteins. The two domains are allosterically coupled so that, when ATP is bound to the NBD, the SBD binds relatively weakly to clients. When ADP is bound in the NBD, a conformational change enhances the affinity of the SBD for client proteins.</text>
</comment>
<comment type="similarity">
    <text evidence="5">Belongs to the heat shock protein 70 family.</text>
</comment>
<reference key="1">
    <citation type="journal article" date="1996" name="Genetica">
        <title>Cloning and characterization of a 70 kd heat shock cognate (hsc70) gene from the zebrafish (Danio rerio).</title>
        <authorList>
            <person name="Graser R.T."/>
            <person name="Malnar-Dragojevic D."/>
            <person name="Vincek V."/>
        </authorList>
    </citation>
    <scope>NUCLEOTIDE SEQUENCE [MRNA]</scope>
</reference>
<sequence length="649" mass="70974">MSKGPAVGIDLGTTYSCVGVFQHGKVEIIANDQGNRTTPSYVAFTDTERLIGDAAKNQVAMNPTNTVLDANRLNGRQFDDGVVQSDMKHWPFNVINDNSRPKVQVEYKGESKSFYPEEISSMVLTKMKEIAEAYLGKTVSNAVITVPAYSNDSQRQATKDAGTISGLNVLVIINEPTAAAIAYGLDKKVGAERNVLIFDLGGGSFDVSILTIEDGIFEVKSTAGDTHLGGEDFDNRMVNHFITEFKRKHKKDISDNKRAVRRLRTACERAKRTLSSSTQASIEIDSLYEGIDFYTSITRARFEELNADLFRGTLDPVEKALRDAKMDKAQIHDIVLVGGSTRIPKIQKLLQDYFNGKELNKSINPDEAVAYGAAVQAAILSGDKSENVQDLLLLDVTPLSLGIETAGGVMTVLIKRNTTIPTKQTQTFTTYSDNQPGVLIQVYEGERAMTKDNNLLGKFELTGIPPAPRGVPQIEVTFDIDANGIMNVSAVDKSTGKENKITITNDKGRLSKEDIERMVQEAEKYKAEDDVQRDKVSAKNGLESYAFNMKSTVEDEKLKGKISDEDKQKILDKCNEVIGWLDKNQTAEREEFEHQQKELEKVCNPIITKLYQSAGGMPGGMPEGMPGGFPGAGAAPGGGSSGPTIEEVD</sequence>